<gene>
    <name type="primary">mus-23</name>
    <name type="ORF">B11O9.50</name>
    <name type="ORF">NCU08730</name>
</gene>
<protein>
    <recommendedName>
        <fullName>Double-strand break repair protein mus-23</fullName>
    </recommendedName>
    <alternativeName>
        <fullName>Recombinational repair protein mus-23</fullName>
    </alternativeName>
</protein>
<organism>
    <name type="scientific">Neurospora crassa (strain ATCC 24698 / 74-OR23-1A / CBS 708.71 / DSM 1257 / FGSC 987)</name>
    <dbReference type="NCBI Taxonomy" id="367110"/>
    <lineage>
        <taxon>Eukaryota</taxon>
        <taxon>Fungi</taxon>
        <taxon>Dikarya</taxon>
        <taxon>Ascomycota</taxon>
        <taxon>Pezizomycotina</taxon>
        <taxon>Sordariomycetes</taxon>
        <taxon>Sordariomycetidae</taxon>
        <taxon>Sordariales</taxon>
        <taxon>Sordariaceae</taxon>
        <taxon>Neurospora</taxon>
    </lineage>
</organism>
<name>MRE11_NEUCR</name>
<comment type="function">
    <text evidence="2">Core component of the MRN complex, which plays a central role in double-strand break (DSB) repair, DNA recombination, maintenance of telomere integrity and meiosis. The MRN complex is involved in the repair of DNA double-strand breaks (DSBs) via homologous recombination (HR), an error-free mechanism which primarily occurs during S and G2 phases. The complex (1) mediates the end resection of damaged DNA, which generates proper single-stranded DNA, a key initial steps in HR, and is (2) required for the recruitment of other repair factors and efficient activation of ATM and ATR upon DNA damage. Within the MRN complex, MRE11 possesses both single-strand endonuclease activity and double-strand-specific 3'-5' exonuclease activity. MRE11 first endonucleolytically cleaves the 5' strand at DNA DSB ends to prevent non-homologous end joining (NHEJ) and licence HR. It then generates a single-stranded DNA gap via 3' to 5' exonucleolytic degradation, which is required for single-strand invasion and recombination. The MRN complex is also required for the processing of R-loops.</text>
</comment>
<comment type="cofactor">
    <cofactor evidence="1">
        <name>Mn(2+)</name>
        <dbReference type="ChEBI" id="CHEBI:29035"/>
    </cofactor>
</comment>
<comment type="subunit">
    <text evidence="1">Component of the MRN complex composed of two heterodimers RAD50 and MRE11 associated with a single NBS1.</text>
</comment>
<comment type="subcellular location">
    <subcellularLocation>
        <location evidence="2">Nucleus</location>
    </subcellularLocation>
    <subcellularLocation>
        <location evidence="3">Chromosome</location>
        <location evidence="3">Telomere</location>
    </subcellularLocation>
    <subcellularLocation>
        <location evidence="3">Chromosome</location>
    </subcellularLocation>
    <text evidence="3">Localizes to discrete nuclear foci after treatment with genotoxic agents.</text>
</comment>
<comment type="similarity">
    <text evidence="6">Belongs to the MRE11/RAD32 family.</text>
</comment>
<comment type="sequence caution" evidence="6">
    <conflict type="erroneous gene model prediction">
        <sequence resource="EMBL-CDS" id="BAA32417"/>
    </conflict>
</comment>
<comment type="sequence caution" evidence="6">
    <conflict type="erroneous gene model prediction">
        <sequence resource="EMBL-CDS" id="CAC28562"/>
    </conflict>
</comment>
<comment type="sequence caution" evidence="6">
    <conflict type="frameshift">
        <sequence resource="EMBL-CDS" id="CAC28562"/>
    </conflict>
</comment>
<comment type="sequence caution" evidence="6">
    <conflict type="erroneous gene model prediction">
        <sequence resource="EMBL-CDS" id="EAA34355"/>
    </conflict>
</comment>
<keyword id="KW-0158">Chromosome</keyword>
<keyword id="KW-0227">DNA damage</keyword>
<keyword id="KW-0234">DNA repair</keyword>
<keyword id="KW-0255">Endonuclease</keyword>
<keyword id="KW-0269">Exonuclease</keyword>
<keyword id="KW-0378">Hydrolase</keyword>
<keyword id="KW-0464">Manganese</keyword>
<keyword id="KW-0469">Meiosis</keyword>
<keyword id="KW-0479">Metal-binding</keyword>
<keyword id="KW-0540">Nuclease</keyword>
<keyword id="KW-0539">Nucleus</keyword>
<keyword id="KW-1185">Reference proteome</keyword>
<keyword id="KW-0779">Telomere</keyword>
<feature type="chain" id="PRO_0000138682" description="Double-strand break repair protein mus-23">
    <location>
        <begin position="1"/>
        <end position="739"/>
    </location>
</feature>
<feature type="region of interest" description="Disordered" evidence="5">
    <location>
        <begin position="516"/>
        <end position="739"/>
    </location>
</feature>
<feature type="compositionally biased region" description="Basic residues" evidence="5">
    <location>
        <begin position="523"/>
        <end position="532"/>
    </location>
</feature>
<feature type="compositionally biased region" description="Basic and acidic residues" evidence="5">
    <location>
        <begin position="559"/>
        <end position="568"/>
    </location>
</feature>
<feature type="compositionally biased region" description="Low complexity" evidence="5">
    <location>
        <begin position="599"/>
        <end position="636"/>
    </location>
</feature>
<feature type="compositionally biased region" description="Basic residues" evidence="5">
    <location>
        <begin position="637"/>
        <end position="646"/>
    </location>
</feature>
<feature type="compositionally biased region" description="Acidic residues" evidence="5">
    <location>
        <begin position="650"/>
        <end position="686"/>
    </location>
</feature>
<feature type="compositionally biased region" description="Low complexity" evidence="5">
    <location>
        <begin position="694"/>
        <end position="722"/>
    </location>
</feature>
<feature type="active site" description="Proton donor" evidence="4">
    <location>
        <position position="124"/>
    </location>
</feature>
<feature type="binding site" evidence="1">
    <location>
        <position position="16"/>
    </location>
    <ligand>
        <name>Mn(2+)</name>
        <dbReference type="ChEBI" id="CHEBI:29035"/>
        <label>1</label>
    </ligand>
</feature>
<feature type="binding site" evidence="1">
    <location>
        <position position="18"/>
    </location>
    <ligand>
        <name>Mn(2+)</name>
        <dbReference type="ChEBI" id="CHEBI:29035"/>
        <label>1</label>
    </ligand>
</feature>
<feature type="binding site" evidence="1">
    <location>
        <position position="56"/>
    </location>
    <ligand>
        <name>Mn(2+)</name>
        <dbReference type="ChEBI" id="CHEBI:29035"/>
        <label>1</label>
    </ligand>
</feature>
<feature type="binding site" evidence="1">
    <location>
        <position position="56"/>
    </location>
    <ligand>
        <name>Mn(2+)</name>
        <dbReference type="ChEBI" id="CHEBI:29035"/>
        <label>2</label>
    </ligand>
</feature>
<feature type="binding site" evidence="1">
    <location>
        <position position="123"/>
    </location>
    <ligand>
        <name>Mn(2+)</name>
        <dbReference type="ChEBI" id="CHEBI:29035"/>
        <label>2</label>
    </ligand>
</feature>
<feature type="binding site" evidence="1">
    <location>
        <position position="212"/>
    </location>
    <ligand>
        <name>Mn(2+)</name>
        <dbReference type="ChEBI" id="CHEBI:29035"/>
        <label>2</label>
    </ligand>
</feature>
<feature type="binding site" evidence="1">
    <location>
        <position position="240"/>
    </location>
    <ligand>
        <name>Mn(2+)</name>
        <dbReference type="ChEBI" id="CHEBI:29035"/>
        <label>2</label>
    </ligand>
</feature>
<feature type="binding site" evidence="1">
    <location>
        <position position="242"/>
    </location>
    <ligand>
        <name>Mn(2+)</name>
        <dbReference type="ChEBI" id="CHEBI:29035"/>
        <label>1</label>
    </ligand>
</feature>
<reference key="1">
    <citation type="journal article" date="1997" name="Mol. Gen. Genet.">
        <title>Genetic and molecular characterization of Neurospora crassa mus-23: a gene involved in recombinational repair.</title>
        <authorList>
            <person name="Watanabe K."/>
            <person name="Sakuraba Y."/>
            <person name="Inoue H."/>
        </authorList>
    </citation>
    <scope>NUCLEOTIDE SEQUENCE [GENOMIC DNA]</scope>
</reference>
<reference key="2">
    <citation type="journal article" date="2003" name="Nucleic Acids Res.">
        <title>What's in the genome of a filamentous fungus? Analysis of the Neurospora genome sequence.</title>
        <authorList>
            <person name="Mannhaupt G."/>
            <person name="Montrone C."/>
            <person name="Haase D."/>
            <person name="Mewes H.-W."/>
            <person name="Aign V."/>
            <person name="Hoheisel J.D."/>
            <person name="Fartmann B."/>
            <person name="Nyakatura G."/>
            <person name="Kempken F."/>
            <person name="Maier J."/>
            <person name="Schulte U."/>
        </authorList>
    </citation>
    <scope>NUCLEOTIDE SEQUENCE [LARGE SCALE GENOMIC DNA]</scope>
    <source>
        <strain>ATCC 24698 / 74-OR23-1A / CBS 708.71 / DSM 1257 / FGSC 987</strain>
    </source>
</reference>
<reference key="3">
    <citation type="journal article" date="2003" name="Nature">
        <title>The genome sequence of the filamentous fungus Neurospora crassa.</title>
        <authorList>
            <person name="Galagan J.E."/>
            <person name="Calvo S.E."/>
            <person name="Borkovich K.A."/>
            <person name="Selker E.U."/>
            <person name="Read N.D."/>
            <person name="Jaffe D.B."/>
            <person name="FitzHugh W."/>
            <person name="Ma L.-J."/>
            <person name="Smirnov S."/>
            <person name="Purcell S."/>
            <person name="Rehman B."/>
            <person name="Elkins T."/>
            <person name="Engels R."/>
            <person name="Wang S."/>
            <person name="Nielsen C.B."/>
            <person name="Butler J."/>
            <person name="Endrizzi M."/>
            <person name="Qui D."/>
            <person name="Ianakiev P."/>
            <person name="Bell-Pedersen D."/>
            <person name="Nelson M.A."/>
            <person name="Werner-Washburne M."/>
            <person name="Selitrennikoff C.P."/>
            <person name="Kinsey J.A."/>
            <person name="Braun E.L."/>
            <person name="Zelter A."/>
            <person name="Schulte U."/>
            <person name="Kothe G.O."/>
            <person name="Jedd G."/>
            <person name="Mewes H.-W."/>
            <person name="Staben C."/>
            <person name="Marcotte E."/>
            <person name="Greenberg D."/>
            <person name="Roy A."/>
            <person name="Foley K."/>
            <person name="Naylor J."/>
            <person name="Stange-Thomann N."/>
            <person name="Barrett R."/>
            <person name="Gnerre S."/>
            <person name="Kamal M."/>
            <person name="Kamvysselis M."/>
            <person name="Mauceli E.W."/>
            <person name="Bielke C."/>
            <person name="Rudd S."/>
            <person name="Frishman D."/>
            <person name="Krystofova S."/>
            <person name="Rasmussen C."/>
            <person name="Metzenberg R.L."/>
            <person name="Perkins D.D."/>
            <person name="Kroken S."/>
            <person name="Cogoni C."/>
            <person name="Macino G."/>
            <person name="Catcheside D.E.A."/>
            <person name="Li W."/>
            <person name="Pratt R.J."/>
            <person name="Osmani S.A."/>
            <person name="DeSouza C.P.C."/>
            <person name="Glass N.L."/>
            <person name="Orbach M.J."/>
            <person name="Berglund J.A."/>
            <person name="Voelker R."/>
            <person name="Yarden O."/>
            <person name="Plamann M."/>
            <person name="Seiler S."/>
            <person name="Dunlap J.C."/>
            <person name="Radford A."/>
            <person name="Aramayo R."/>
            <person name="Natvig D.O."/>
            <person name="Alex L.A."/>
            <person name="Mannhaupt G."/>
            <person name="Ebbole D.J."/>
            <person name="Freitag M."/>
            <person name="Paulsen I."/>
            <person name="Sachs M.S."/>
            <person name="Lander E.S."/>
            <person name="Nusbaum C."/>
            <person name="Birren B.W."/>
        </authorList>
    </citation>
    <scope>NUCLEOTIDE SEQUENCE [LARGE SCALE GENOMIC DNA]</scope>
    <source>
        <strain>ATCC 24698 / 74-OR23-1A / CBS 708.71 / DSM 1257 / FGSC 987</strain>
    </source>
</reference>
<sequence length="739" mass="83544">MPRSEADTIRILVSTDNHVGYAERHPVRKDDSWRTFDEIMQIAKKQDVDMVLLGGDLFHENKPSRKSMYQVMRSLRKHCLGMKPCELEFLSDAAEVFEGAFPFVNYEDPDINVAIPVFSIHGNHDDPSGDGHYCSLDLLQAAGLVNYFGRVPEADNIHVKPILLQKGRTKMALYGLSNVRDERMHRTFRDNKVRFYRPNQQKNDWFNLLALHQNHYAHTRTSYVAENMLPDFMDLVIWGHEHECLIDPVRNPETGFHVMQPGSSVATSLVPGEAVPKHVAILNITGRKFEVDKIPLKTVRPFVTREIVLASDKRFKGLDKQNNRHEITKRLMVIVNEMIEEANAEWRAVHAEDDDMDEDMEPPLPLVRLKVDYTAPDGARYEVENPHRFSNRFTGKVANHNDVVRFHCNTKGKKNVATAPGVREDIAEILESADTIKVDNLVQEFFAQQSLKILPQAPFSDAVNQFVSKDDKHAVEMFVIESLSTQVKELLQLDDDKIVDLDAHIQDFRQVMEKSFDAGQHKQAQRTKRFKRKPDGWDSDLDGHWINQPQALEDIPAEVEPKGNDRPTKRVPTSGVTFSDEDEDMDMDNQPVPIRAAPKRGAAAKTTAAAKKAAPGKKAAPAKKAAPAKKAAPAKKAPARGRKKKTPFVDSDEEEEEDYPEDDDEEEEEADEEEEDVIMEDDEEDPPAPPPKPKATSRVASTRASARATPVRATPARATQARLRLRRPPKPGLLARRLG</sequence>
<proteinExistence type="inferred from homology"/>
<accession>Q9C291</accession>
<accession>O74114</accession>
<accession>Q7RVZ7</accession>
<evidence type="ECO:0000250" key="1">
    <source>
        <dbReference type="UniProtKB" id="G0RYR3"/>
    </source>
</evidence>
<evidence type="ECO:0000250" key="2">
    <source>
        <dbReference type="UniProtKB" id="P32829"/>
    </source>
</evidence>
<evidence type="ECO:0000250" key="3">
    <source>
        <dbReference type="UniProtKB" id="P49959"/>
    </source>
</evidence>
<evidence type="ECO:0000255" key="4">
    <source>
        <dbReference type="PIRSR" id="PIRSR000882-1"/>
    </source>
</evidence>
<evidence type="ECO:0000256" key="5">
    <source>
        <dbReference type="SAM" id="MobiDB-lite"/>
    </source>
</evidence>
<evidence type="ECO:0000305" key="6"/>
<dbReference type="EMBL" id="AL513409">
    <property type="protein sequence ID" value="CAC28562.2"/>
    <property type="status" value="ALT_SEQ"/>
    <property type="molecule type" value="Genomic_DNA"/>
</dbReference>
<dbReference type="EMBL" id="AB002530">
    <property type="protein sequence ID" value="BAA32417.1"/>
    <property type="status" value="ALT_SEQ"/>
    <property type="molecule type" value="Genomic_DNA"/>
</dbReference>
<dbReference type="EMBL" id="CM002237">
    <property type="protein sequence ID" value="EAA34355.2"/>
    <property type="status" value="ALT_SEQ"/>
    <property type="molecule type" value="Genomic_DNA"/>
</dbReference>
<dbReference type="RefSeq" id="XP_963591.2">
    <property type="nucleotide sequence ID" value="XM_958498.3"/>
</dbReference>
<dbReference type="SMR" id="Q9C291"/>
<dbReference type="FunCoup" id="Q9C291">
    <property type="interactions" value="981"/>
</dbReference>
<dbReference type="STRING" id="367110.Q9C291"/>
<dbReference type="PaxDb" id="5141-EFNCRP00000008604"/>
<dbReference type="EnsemblFungi" id="EAA34355">
    <property type="protein sequence ID" value="EAA34355"/>
    <property type="gene ID" value="NCU08730"/>
</dbReference>
<dbReference type="GeneID" id="3879754"/>
<dbReference type="KEGG" id="ncr:NCU08730"/>
<dbReference type="HOGENOM" id="CLU_009535_1_1_1"/>
<dbReference type="InParanoid" id="Q9C291"/>
<dbReference type="OrthoDB" id="30417at2759"/>
<dbReference type="Proteomes" id="UP000001805">
    <property type="component" value="Chromosome 6, Linkage Group II"/>
</dbReference>
<dbReference type="GO" id="GO:0000781">
    <property type="term" value="C:chromosome, telomeric region"/>
    <property type="evidence" value="ECO:0007669"/>
    <property type="project" value="UniProtKB-SubCell"/>
</dbReference>
<dbReference type="GO" id="GO:0030870">
    <property type="term" value="C:Mre11 complex"/>
    <property type="evidence" value="ECO:0000318"/>
    <property type="project" value="GO_Central"/>
</dbReference>
<dbReference type="GO" id="GO:0035861">
    <property type="term" value="C:site of double-strand break"/>
    <property type="evidence" value="ECO:0000318"/>
    <property type="project" value="GO_Central"/>
</dbReference>
<dbReference type="GO" id="GO:0008296">
    <property type="term" value="F:3'-5'-DNA exonuclease activity"/>
    <property type="evidence" value="ECO:0007669"/>
    <property type="project" value="InterPro"/>
</dbReference>
<dbReference type="GO" id="GO:0030145">
    <property type="term" value="F:manganese ion binding"/>
    <property type="evidence" value="ECO:0007669"/>
    <property type="project" value="InterPro"/>
</dbReference>
<dbReference type="GO" id="GO:0000014">
    <property type="term" value="F:single-stranded DNA endodeoxyribonuclease activity"/>
    <property type="evidence" value="ECO:0000318"/>
    <property type="project" value="GO_Central"/>
</dbReference>
<dbReference type="GO" id="GO:0000724">
    <property type="term" value="P:double-strand break repair via homologous recombination"/>
    <property type="evidence" value="ECO:0000318"/>
    <property type="project" value="GO_Central"/>
</dbReference>
<dbReference type="GO" id="GO:0006303">
    <property type="term" value="P:double-strand break repair via nonhomologous end joining"/>
    <property type="evidence" value="ECO:0000318"/>
    <property type="project" value="GO_Central"/>
</dbReference>
<dbReference type="GO" id="GO:0042138">
    <property type="term" value="P:meiotic DNA double-strand break formation"/>
    <property type="evidence" value="ECO:0000318"/>
    <property type="project" value="GO_Central"/>
</dbReference>
<dbReference type="GO" id="GO:0097552">
    <property type="term" value="P:mitochondrial double-strand break repair via homologous recombination"/>
    <property type="evidence" value="ECO:0000318"/>
    <property type="project" value="GO_Central"/>
</dbReference>
<dbReference type="GO" id="GO:0007095">
    <property type="term" value="P:mitotic G2 DNA damage checkpoint signaling"/>
    <property type="evidence" value="ECO:0000318"/>
    <property type="project" value="GO_Central"/>
</dbReference>
<dbReference type="GO" id="GO:0031573">
    <property type="term" value="P:mitotic intra-S DNA damage checkpoint signaling"/>
    <property type="evidence" value="ECO:0000318"/>
    <property type="project" value="GO_Central"/>
</dbReference>
<dbReference type="GO" id="GO:0000723">
    <property type="term" value="P:telomere maintenance"/>
    <property type="evidence" value="ECO:0000318"/>
    <property type="project" value="GO_Central"/>
</dbReference>
<dbReference type="CDD" id="cd00840">
    <property type="entry name" value="MPP_Mre11_N"/>
    <property type="match status" value="1"/>
</dbReference>
<dbReference type="FunFam" id="3.60.21.10:FF:000011">
    <property type="entry name" value="Double-strand break repair protein"/>
    <property type="match status" value="1"/>
</dbReference>
<dbReference type="Gene3D" id="3.60.21.10">
    <property type="match status" value="1"/>
</dbReference>
<dbReference type="Gene3D" id="3.30.110.110">
    <property type="entry name" value="Mre11, capping domain"/>
    <property type="match status" value="1"/>
</dbReference>
<dbReference type="InterPro" id="IPR004843">
    <property type="entry name" value="Calcineurin-like_PHP_ApaH"/>
</dbReference>
<dbReference type="InterPro" id="IPR029052">
    <property type="entry name" value="Metallo-depent_PP-like"/>
</dbReference>
<dbReference type="InterPro" id="IPR003701">
    <property type="entry name" value="Mre11"/>
</dbReference>
<dbReference type="InterPro" id="IPR038487">
    <property type="entry name" value="Mre11_capping_dom"/>
</dbReference>
<dbReference type="InterPro" id="IPR007281">
    <property type="entry name" value="Mre11_DNA-bd"/>
</dbReference>
<dbReference type="InterPro" id="IPR041796">
    <property type="entry name" value="Mre11_N"/>
</dbReference>
<dbReference type="NCBIfam" id="TIGR00583">
    <property type="entry name" value="mre11"/>
    <property type="match status" value="1"/>
</dbReference>
<dbReference type="PANTHER" id="PTHR10139">
    <property type="entry name" value="DOUBLE-STRAND BREAK REPAIR PROTEIN MRE11"/>
    <property type="match status" value="1"/>
</dbReference>
<dbReference type="PANTHER" id="PTHR10139:SF1">
    <property type="entry name" value="DOUBLE-STRAND BREAK REPAIR PROTEIN MRE11"/>
    <property type="match status" value="1"/>
</dbReference>
<dbReference type="Pfam" id="PF00149">
    <property type="entry name" value="Metallophos"/>
    <property type="match status" value="1"/>
</dbReference>
<dbReference type="Pfam" id="PF04152">
    <property type="entry name" value="Mre11_DNA_bind"/>
    <property type="match status" value="1"/>
</dbReference>
<dbReference type="PIRSF" id="PIRSF000882">
    <property type="entry name" value="DSB_repair_MRE11"/>
    <property type="match status" value="1"/>
</dbReference>
<dbReference type="SMART" id="SM01347">
    <property type="entry name" value="Mre11_DNA_bind"/>
    <property type="match status" value="1"/>
</dbReference>
<dbReference type="SUPFAM" id="SSF56300">
    <property type="entry name" value="Metallo-dependent phosphatases"/>
    <property type="match status" value="1"/>
</dbReference>